<organism>
    <name type="scientific">Bacteroides thetaiotaomicron (strain ATCC 29148 / DSM 2079 / JCM 5827 / CCUG 10774 / NCTC 10582 / VPI-5482 / E50)</name>
    <dbReference type="NCBI Taxonomy" id="226186"/>
    <lineage>
        <taxon>Bacteria</taxon>
        <taxon>Pseudomonadati</taxon>
        <taxon>Bacteroidota</taxon>
        <taxon>Bacteroidia</taxon>
        <taxon>Bacteroidales</taxon>
        <taxon>Bacteroidaceae</taxon>
        <taxon>Bacteroides</taxon>
    </lineage>
</organism>
<comment type="function">
    <text evidence="3 4">Involved in 'Ser-type' sulfatase maturation under anaerobic conditions. Links the heparin and the chondroitin sulfate utilization pathways which contribute to the colonization of the intestinal tract. May catalyze the activation of chondro-6-sulfatase, i.e. the post-translational modification of a specific serine residue into 3-oxoalanine (also known as C(alpha)-formylglycine (FGly)), by a free radical chemical mechanism initiated via the reductive cleavage of S-adenosyl-L-methionine (SAM). Is also able to oxidize a cysteine residue in a synthetic substrate to FGly in vitro, but not in a recombinant Cys-type sulfatase in vivo. But since B.thetaiotaomicron possesses only Ser-type sulfatases, the oxidation of serine residues to FGly is the sole physiological activity.</text>
</comment>
<comment type="catalytic activity">
    <reaction evidence="4">
        <text>L-seryl-[sulfatase] + S-adenosyl-L-methionine = 3-oxo-L-alanyl-[sulfatase] + 5'-deoxyadenosine + L-methionine + H(+)</text>
        <dbReference type="Rhea" id="RHEA:17609"/>
        <dbReference type="Rhea" id="RHEA-COMP:12901"/>
        <dbReference type="Rhea" id="RHEA-COMP:15882"/>
        <dbReference type="ChEBI" id="CHEBI:15378"/>
        <dbReference type="ChEBI" id="CHEBI:17319"/>
        <dbReference type="ChEBI" id="CHEBI:29999"/>
        <dbReference type="ChEBI" id="CHEBI:57844"/>
        <dbReference type="ChEBI" id="CHEBI:59789"/>
        <dbReference type="ChEBI" id="CHEBI:85621"/>
        <dbReference type="EC" id="1.1.98.7"/>
    </reaction>
</comment>
<comment type="cofactor">
    <cofactor evidence="2 5 8">
        <name>[4Fe-4S] cluster</name>
        <dbReference type="ChEBI" id="CHEBI:49883"/>
    </cofactor>
    <text evidence="1 5">Binds 3 [4Fe-4S] clusters (PubMed:20218986). The first cluster is coordinated with 3 cysteines and an exchangeable S-adenosyl-L-methionine (By similarity).</text>
</comment>
<comment type="pathway">
    <text>Protein modification; sulfatase oxidation.</text>
</comment>
<comment type="similarity">
    <text evidence="7">Belongs to the radical SAM superfamily. Anaerobic sulfatase-maturating enzyme family.</text>
</comment>
<gene>
    <name type="primary">chuR</name>
    <name type="ordered locus">BT_0238</name>
</gene>
<sequence length="414" mass="47949">MKATTYAPFAKPLYVMVKPVGAVCNLACEYCYYLEKANLYKENPKHVMSDELLEKFIDEYINSQTMPQVLFTWHGGETLMRPLSFYKKAMELQKKYARGRTIDNCIQTNGTLLTDEWCEFFRENNWLVGVSIDGPQEFHDEYRKNKMGKPSFVKVMQGINLLKKHGVEWNAMAVVNDFNAEYPLDFYNFFKEIDCHYIQFAPIVERIVSHQDGRHLASLAEGKEGALADFSVSPEQWGNFLCTIFDEWVKEDVGKFFIQIFDSTLANWMGEQPGVCTMAKHCGHAGVMEFNGDVYSCDHFVFPEYKLGNIYSQTLVEMMHSERQHNFGTMKYQSLPTQCKECDFLFACNGECPKNRFSRTADGEPGLNYLCKGYYQYFQHVAPYMDFMKKELMNQQAPANIMKALKDGSLKIEY</sequence>
<dbReference type="EC" id="1.1.98.7" evidence="4"/>
<dbReference type="EMBL" id="L00678">
    <property type="protein sequence ID" value="AAA22908.1"/>
    <property type="molecule type" value="Genomic_DNA"/>
</dbReference>
<dbReference type="EMBL" id="AE015928">
    <property type="protein sequence ID" value="AAO75345.1"/>
    <property type="molecule type" value="Genomic_DNA"/>
</dbReference>
<dbReference type="PIR" id="A47014">
    <property type="entry name" value="A47014"/>
</dbReference>
<dbReference type="RefSeq" id="NP_809151.1">
    <property type="nucleotide sequence ID" value="NC_004663.1"/>
</dbReference>
<dbReference type="RefSeq" id="WP_008766211.1">
    <property type="nucleotide sequence ID" value="NC_004663.1"/>
</dbReference>
<dbReference type="SMR" id="Q02550"/>
<dbReference type="FunCoup" id="Q02550">
    <property type="interactions" value="21"/>
</dbReference>
<dbReference type="STRING" id="226186.BT_0238"/>
<dbReference type="PaxDb" id="226186-BT_0238"/>
<dbReference type="EnsemblBacteria" id="AAO75345">
    <property type="protein sequence ID" value="AAO75345"/>
    <property type="gene ID" value="BT_0238"/>
</dbReference>
<dbReference type="GeneID" id="60926202"/>
<dbReference type="KEGG" id="bth:BT_0238"/>
<dbReference type="PATRIC" id="fig|226186.12.peg.239"/>
<dbReference type="eggNOG" id="COG0641">
    <property type="taxonomic scope" value="Bacteria"/>
</dbReference>
<dbReference type="HOGENOM" id="CLU_009273_10_0_10"/>
<dbReference type="InParanoid" id="Q02550"/>
<dbReference type="OrthoDB" id="9808591at2"/>
<dbReference type="BRENDA" id="1.1.98.7">
    <property type="organism ID" value="709"/>
</dbReference>
<dbReference type="UniPathway" id="UPA00910"/>
<dbReference type="Proteomes" id="UP000001414">
    <property type="component" value="Chromosome"/>
</dbReference>
<dbReference type="GO" id="GO:0051539">
    <property type="term" value="F:4 iron, 4 sulfur cluster binding"/>
    <property type="evidence" value="ECO:0007669"/>
    <property type="project" value="UniProtKB-KW"/>
</dbReference>
<dbReference type="GO" id="GO:0046872">
    <property type="term" value="F:metal ion binding"/>
    <property type="evidence" value="ECO:0007669"/>
    <property type="project" value="UniProtKB-KW"/>
</dbReference>
<dbReference type="GO" id="GO:0016491">
    <property type="term" value="F:oxidoreductase activity"/>
    <property type="evidence" value="ECO:0007669"/>
    <property type="project" value="UniProtKB-KW"/>
</dbReference>
<dbReference type="CDD" id="cd01335">
    <property type="entry name" value="Radical_SAM"/>
    <property type="match status" value="1"/>
</dbReference>
<dbReference type="CDD" id="cd21120">
    <property type="entry name" value="SPASM_anSME"/>
    <property type="match status" value="1"/>
</dbReference>
<dbReference type="Gene3D" id="3.20.20.70">
    <property type="entry name" value="Aldolase class I"/>
    <property type="match status" value="1"/>
</dbReference>
<dbReference type="InterPro" id="IPR023885">
    <property type="entry name" value="4Fe4S-binding_SPASM_dom"/>
</dbReference>
<dbReference type="InterPro" id="IPR013785">
    <property type="entry name" value="Aldolase_TIM"/>
</dbReference>
<dbReference type="InterPro" id="IPR034491">
    <property type="entry name" value="Anaerob_Ser_sulfatase-maturase"/>
</dbReference>
<dbReference type="InterPro" id="IPR007197">
    <property type="entry name" value="rSAM"/>
</dbReference>
<dbReference type="InterPro" id="IPR047207">
    <property type="entry name" value="SPASM_anSME"/>
</dbReference>
<dbReference type="InterPro" id="IPR023867">
    <property type="entry name" value="Sulphatase_maturase_rSAM"/>
</dbReference>
<dbReference type="NCBIfam" id="NF010308">
    <property type="entry name" value="PRK13745.1"/>
    <property type="match status" value="1"/>
</dbReference>
<dbReference type="NCBIfam" id="TIGR04085">
    <property type="entry name" value="rSAM_more_4Fe4S"/>
    <property type="match status" value="1"/>
</dbReference>
<dbReference type="NCBIfam" id="TIGR03942">
    <property type="entry name" value="sulfatase_rSAM"/>
    <property type="match status" value="1"/>
</dbReference>
<dbReference type="PANTHER" id="PTHR43273">
    <property type="entry name" value="ANAEROBIC SULFATASE-MATURATING ENZYME HOMOLOG ASLB-RELATED"/>
    <property type="match status" value="1"/>
</dbReference>
<dbReference type="PANTHER" id="PTHR43273:SF3">
    <property type="entry name" value="ANAEROBIC SULFATASE-MATURATING ENZYME HOMOLOG ASLB-RELATED"/>
    <property type="match status" value="1"/>
</dbReference>
<dbReference type="Pfam" id="PF04055">
    <property type="entry name" value="Radical_SAM"/>
    <property type="match status" value="1"/>
</dbReference>
<dbReference type="Pfam" id="PF13186">
    <property type="entry name" value="SPASM"/>
    <property type="match status" value="1"/>
</dbReference>
<dbReference type="SFLD" id="SFLDF00285">
    <property type="entry name" value="anaerobic_Ser-type_sulfatase-m"/>
    <property type="match status" value="1"/>
</dbReference>
<dbReference type="SFLD" id="SFLDG01386">
    <property type="entry name" value="main_SPASM_domain-containing"/>
    <property type="match status" value="1"/>
</dbReference>
<dbReference type="SFLD" id="SFLDG01384">
    <property type="entry name" value="thioether_bond_formation_requi"/>
    <property type="match status" value="1"/>
</dbReference>
<dbReference type="SUPFAM" id="SSF102114">
    <property type="entry name" value="Radical SAM enzymes"/>
    <property type="match status" value="1"/>
</dbReference>
<dbReference type="PROSITE" id="PS51918">
    <property type="entry name" value="RADICAL_SAM"/>
    <property type="match status" value="1"/>
</dbReference>
<protein>
    <recommendedName>
        <fullName evidence="7">Serine-type anaerobic sulfatase-maturating enzyme</fullName>
        <shortName evidence="7">Ser-type anaerobic sulfatase-maturating enzyme</shortName>
        <ecNumber evidence="4">1.1.98.7</ecNumber>
    </recommendedName>
    <alternativeName>
        <fullName evidence="6">Anaerobic sulfatase-maturating enzyme</fullName>
        <shortName evidence="6">AnSME</shortName>
    </alternativeName>
    <alternativeName>
        <fullName>Chondroitin sulfate/heparin utilization regulation protein</fullName>
    </alternativeName>
</protein>
<evidence type="ECO:0000250" key="1">
    <source>
        <dbReference type="UniProtKB" id="Q0TTH1"/>
    </source>
</evidence>
<evidence type="ECO:0000255" key="2">
    <source>
        <dbReference type="PROSITE-ProRule" id="PRU01266"/>
    </source>
</evidence>
<evidence type="ECO:0000269" key="3">
    <source>
    </source>
</evidence>
<evidence type="ECO:0000269" key="4">
    <source>
    </source>
</evidence>
<evidence type="ECO:0000269" key="5">
    <source>
    </source>
</evidence>
<evidence type="ECO:0000303" key="6">
    <source>
    </source>
</evidence>
<evidence type="ECO:0000305" key="7"/>
<evidence type="ECO:0000305" key="8">
    <source>
    </source>
</evidence>
<evidence type="ECO:0000305" key="9">
    <source>
    </source>
</evidence>
<reference key="1">
    <citation type="journal article" date="1992" name="J. Bacteriol.">
        <title>A locus that contributes to colonization of the intestinal tract by Bacteroides thetaiotaomicron contains a single regulatory gene (chuR) that links two polysaccharide utilization pathways.</title>
        <authorList>
            <person name="Cheng Q."/>
            <person name="Hwa V."/>
            <person name="Salyers A.A."/>
        </authorList>
    </citation>
    <scope>NUCLEOTIDE SEQUENCE [GENOMIC DNA]</scope>
    <scope>FUNCTION IN CHONDROITIN SULFATE UTILIZATION</scope>
    <source>
        <strain>46-1</strain>
        <strain>CS3</strain>
    </source>
</reference>
<reference key="2">
    <citation type="journal article" date="2003" name="Science">
        <title>A genomic view of the human-Bacteroides thetaiotaomicron symbiosis.</title>
        <authorList>
            <person name="Xu J."/>
            <person name="Bjursell M.K."/>
            <person name="Himrod J."/>
            <person name="Deng S."/>
            <person name="Carmichael L.K."/>
            <person name="Chiang H.C."/>
            <person name="Hooper L.V."/>
            <person name="Gordon J.I."/>
        </authorList>
    </citation>
    <scope>NUCLEOTIDE SEQUENCE [LARGE SCALE GENOMIC DNA]</scope>
    <source>
        <strain>ATCC 29148 / DSM 2079 / JCM 5827 / CCUG 10774 / NCTC 10582 / VPI-5482 / E50</strain>
    </source>
</reference>
<reference key="3">
    <citation type="journal article" date="2008" name="J. Biol. Chem.">
        <title>Anaerobic sulfatase-maturating enzymes - first dual substrate radical S-adenosylmethionine enzymes.</title>
        <authorList>
            <person name="Benjdia A."/>
            <person name="Subramanian S."/>
            <person name="Leprince J."/>
            <person name="Vaudry H."/>
            <person name="Johnson M.K."/>
            <person name="Berteau O."/>
        </authorList>
    </citation>
    <scope>FUNCTION AS A SULFATASE-MATURATING ENZYME</scope>
    <scope>CATALYTIC ACTIVITY</scope>
    <scope>SUBSTRATE SPECIFICITY</scope>
    <scope>COFACTOR</scope>
    <scope>REACTION MECHANISM</scope>
    <source>
        <strain>ATCC 29148 / DSM 2079 / JCM 5827 / CCUG 10774 / NCTC 10582 / VPI-5482 / E50</strain>
    </source>
</reference>
<reference key="4">
    <citation type="journal article" date="2010" name="FEBS J.">
        <title>Anaerobic sulfatase-maturating enzyme--a mechanistic link with glycyl radical-activating enzymes?</title>
        <authorList>
            <person name="Benjdia A."/>
            <person name="Subramanian S."/>
            <person name="Leprince J."/>
            <person name="Vaudry H."/>
            <person name="Johnson M.K."/>
            <person name="Berteau O."/>
        </authorList>
    </citation>
    <scope>COFACTOR</scope>
    <scope>MUTAGENESIS OF CYS-24; CYS-28; CYS-31; CYS-276; CYS-282; CYS-339; CYS-342 AND CYS-348</scope>
</reference>
<keyword id="KW-0004">4Fe-4S</keyword>
<keyword id="KW-0408">Iron</keyword>
<keyword id="KW-0411">Iron-sulfur</keyword>
<keyword id="KW-0479">Metal-binding</keyword>
<keyword id="KW-0560">Oxidoreductase</keyword>
<keyword id="KW-1185">Reference proteome</keyword>
<keyword id="KW-0949">S-adenosyl-L-methionine</keyword>
<accession>Q02550</accession>
<proteinExistence type="evidence at protein level"/>
<feature type="chain" id="PRO_0000134462" description="Serine-type anaerobic sulfatase-maturating enzyme">
    <location>
        <begin position="1"/>
        <end position="414"/>
    </location>
</feature>
<feature type="domain" description="Radical SAM core" evidence="2">
    <location>
        <begin position="5"/>
        <end position="250"/>
    </location>
</feature>
<feature type="active site" description="Proton acceptor" evidence="1">
    <location>
        <position position="298"/>
    </location>
</feature>
<feature type="binding site" evidence="2 9">
    <location>
        <position position="24"/>
    </location>
    <ligand>
        <name>[4Fe-4S] cluster</name>
        <dbReference type="ChEBI" id="CHEBI:49883"/>
        <label>1</label>
        <note>4Fe-4S-S-AdoMet</note>
    </ligand>
</feature>
<feature type="binding site" evidence="2 9">
    <location>
        <position position="28"/>
    </location>
    <ligand>
        <name>[4Fe-4S] cluster</name>
        <dbReference type="ChEBI" id="CHEBI:49883"/>
        <label>1</label>
        <note>4Fe-4S-S-AdoMet</note>
    </ligand>
</feature>
<feature type="binding site" evidence="1">
    <location>
        <position position="30"/>
    </location>
    <ligand>
        <name>S-adenosyl-L-methionine</name>
        <dbReference type="ChEBI" id="CHEBI:59789"/>
    </ligand>
</feature>
<feature type="binding site" evidence="2 9">
    <location>
        <position position="31"/>
    </location>
    <ligand>
        <name>[4Fe-4S] cluster</name>
        <dbReference type="ChEBI" id="CHEBI:49883"/>
        <label>1</label>
        <note>4Fe-4S-S-AdoMet</note>
    </ligand>
</feature>
<feature type="binding site" evidence="1">
    <location>
        <position position="76"/>
    </location>
    <ligand>
        <name>S-adenosyl-L-methionine</name>
        <dbReference type="ChEBI" id="CHEBI:59789"/>
    </ligand>
</feature>
<feature type="binding site" evidence="1">
    <location>
        <position position="131"/>
    </location>
    <ligand>
        <name>S-adenosyl-L-methionine</name>
        <dbReference type="ChEBI" id="CHEBI:59789"/>
    </ligand>
</feature>
<feature type="binding site" evidence="1">
    <location>
        <position position="143"/>
    </location>
    <ligand>
        <name>S-adenosyl-L-methionine</name>
        <dbReference type="ChEBI" id="CHEBI:59789"/>
    </ligand>
</feature>
<feature type="binding site" evidence="9">
    <location>
        <position position="276"/>
    </location>
    <ligand>
        <name>[4Fe-4S] cluster</name>
        <dbReference type="ChEBI" id="CHEBI:49883"/>
        <label>2</label>
    </ligand>
</feature>
<feature type="binding site" evidence="9">
    <location>
        <position position="282"/>
    </location>
    <ligand>
        <name>[4Fe-4S] cluster</name>
        <dbReference type="ChEBI" id="CHEBI:49883"/>
        <label>2</label>
    </ligand>
</feature>
<feature type="binding site" evidence="1">
    <location>
        <position position="297"/>
    </location>
    <ligand>
        <name>[4Fe-4S] cluster</name>
        <dbReference type="ChEBI" id="CHEBI:49883"/>
        <label>2</label>
    </ligand>
</feature>
<feature type="binding site" evidence="9">
    <location>
        <position position="339"/>
    </location>
    <ligand>
        <name>[4Fe-4S] cluster</name>
        <dbReference type="ChEBI" id="CHEBI:49883"/>
        <label>3</label>
    </ligand>
</feature>
<feature type="binding site" evidence="9">
    <location>
        <position position="342"/>
    </location>
    <ligand>
        <name>[4Fe-4S] cluster</name>
        <dbReference type="ChEBI" id="CHEBI:49883"/>
        <label>3</label>
    </ligand>
</feature>
<feature type="binding site" evidence="9">
    <location>
        <position position="348"/>
    </location>
    <ligand>
        <name>[4Fe-4S] cluster</name>
        <dbReference type="ChEBI" id="CHEBI:49883"/>
        <label>3</label>
    </ligand>
</feature>
<feature type="binding site" evidence="1">
    <location>
        <position position="352"/>
    </location>
    <ligand>
        <name>[4Fe-4S] cluster</name>
        <dbReference type="ChEBI" id="CHEBI:49883"/>
        <label>2</label>
    </ligand>
</feature>
<feature type="binding site" evidence="1">
    <location>
        <position position="371"/>
    </location>
    <ligand>
        <name>[4Fe-4S] cluster</name>
        <dbReference type="ChEBI" id="CHEBI:49883"/>
        <label>3</label>
    </ligand>
</feature>
<feature type="mutagenesis site" description="Still contains 4Fe-4S but lacks activity; when associated with A-28 and A-31." evidence="5">
    <original>C</original>
    <variation>A</variation>
    <location>
        <position position="24"/>
    </location>
</feature>
<feature type="mutagenesis site" description="Still contains 4Fe-4S but lacks activity; when associated with A-24 and A-31." evidence="5">
    <original>C</original>
    <variation>A</variation>
    <location>
        <position position="28"/>
    </location>
</feature>
<feature type="mutagenesis site" description="Still contains 4Fe-4S but lacks activity; when associated with A-24 and A-28." evidence="5">
    <original>C</original>
    <variation>A</variation>
    <location>
        <position position="31"/>
    </location>
</feature>
<feature type="mutagenesis site" description="Still contains 4Fe-4S but lacks activity; when associated with A-282." evidence="5">
    <original>C</original>
    <variation>A</variation>
    <location>
        <position position="276"/>
    </location>
</feature>
<feature type="mutagenesis site" description="Still contains 4Fe-4S but lacks activity; when associated with A-276." evidence="5">
    <original>C</original>
    <variation>A</variation>
    <location>
        <position position="282"/>
    </location>
</feature>
<feature type="mutagenesis site" description="Still contains 4Fe-4S but lacks activity; when associated with A-342 and A-348." evidence="5">
    <original>C</original>
    <variation>A</variation>
    <location>
        <position position="339"/>
    </location>
</feature>
<feature type="mutagenesis site" description="Still contains 4Fe-4S but lacks activity; when associated with A-339 and A-348." evidence="5">
    <original>C</original>
    <variation>A</variation>
    <location>
        <position position="342"/>
    </location>
</feature>
<feature type="mutagenesis site" description="Still contains 4Fe-4S but lacks activity; when associated with A-339 and A-342." evidence="5">
    <original>C</original>
    <variation>A</variation>
    <location>
        <position position="348"/>
    </location>
</feature>
<feature type="sequence conflict" description="In Ref. 1; AAA22908." evidence="7" ref="1">
    <original>NIMKALKDGSLKIEY</original>
    <variation>TS</variation>
    <location>
        <begin position="400"/>
        <end position="414"/>
    </location>
</feature>
<name>ANSME_BACTN</name>